<proteinExistence type="inferred from homology"/>
<keyword id="KW-0067">ATP-binding</keyword>
<keyword id="KW-0173">Coenzyme A biosynthesis</keyword>
<keyword id="KW-0963">Cytoplasm</keyword>
<keyword id="KW-0460">Magnesium</keyword>
<keyword id="KW-0547">Nucleotide-binding</keyword>
<keyword id="KW-0548">Nucleotidyltransferase</keyword>
<keyword id="KW-0808">Transferase</keyword>
<name>COAD_LEGPA</name>
<accession>Q5X7J6</accession>
<gene>
    <name evidence="1" type="primary">coaD</name>
    <name type="ordered locus">lpp0609</name>
</gene>
<sequence length="168" mass="18975">MQMVINEMKQKAIYPGTFDPVTNGHIDIITRASTIFPELIVAVASNKNKRPYLSWETRISLLEESVGHLTGVRVVGFDNLLIDFVLEQSAGIILRGLRAVSDFEYEFQLAGMNRKLSKKVETLFLTPAEHLMYISSTLVREIAALNGDISQFVPPNVVRELKKRQNEI</sequence>
<comment type="function">
    <text evidence="1">Reversibly transfers an adenylyl group from ATP to 4'-phosphopantetheine, yielding dephospho-CoA (dPCoA) and pyrophosphate.</text>
</comment>
<comment type="catalytic activity">
    <reaction evidence="1">
        <text>(R)-4'-phosphopantetheine + ATP + H(+) = 3'-dephospho-CoA + diphosphate</text>
        <dbReference type="Rhea" id="RHEA:19801"/>
        <dbReference type="ChEBI" id="CHEBI:15378"/>
        <dbReference type="ChEBI" id="CHEBI:30616"/>
        <dbReference type="ChEBI" id="CHEBI:33019"/>
        <dbReference type="ChEBI" id="CHEBI:57328"/>
        <dbReference type="ChEBI" id="CHEBI:61723"/>
        <dbReference type="EC" id="2.7.7.3"/>
    </reaction>
</comment>
<comment type="cofactor">
    <cofactor evidence="1">
        <name>Mg(2+)</name>
        <dbReference type="ChEBI" id="CHEBI:18420"/>
    </cofactor>
</comment>
<comment type="pathway">
    <text evidence="1">Cofactor biosynthesis; coenzyme A biosynthesis; CoA from (R)-pantothenate: step 4/5.</text>
</comment>
<comment type="subunit">
    <text evidence="1">Homohexamer.</text>
</comment>
<comment type="subcellular location">
    <subcellularLocation>
        <location evidence="1">Cytoplasm</location>
    </subcellularLocation>
</comment>
<comment type="similarity">
    <text evidence="1">Belongs to the bacterial CoaD family.</text>
</comment>
<feature type="chain" id="PRO_0000156224" description="Phosphopantetheine adenylyltransferase">
    <location>
        <begin position="1"/>
        <end position="168"/>
    </location>
</feature>
<feature type="binding site" evidence="1">
    <location>
        <begin position="17"/>
        <end position="18"/>
    </location>
    <ligand>
        <name>ATP</name>
        <dbReference type="ChEBI" id="CHEBI:30616"/>
    </ligand>
</feature>
<feature type="binding site" evidence="1">
    <location>
        <position position="17"/>
    </location>
    <ligand>
        <name>substrate</name>
    </ligand>
</feature>
<feature type="binding site" evidence="1">
    <location>
        <position position="25"/>
    </location>
    <ligand>
        <name>ATP</name>
        <dbReference type="ChEBI" id="CHEBI:30616"/>
    </ligand>
</feature>
<feature type="binding site" evidence="1">
    <location>
        <position position="49"/>
    </location>
    <ligand>
        <name>substrate</name>
    </ligand>
</feature>
<feature type="binding site" evidence="1">
    <location>
        <position position="81"/>
    </location>
    <ligand>
        <name>substrate</name>
    </ligand>
</feature>
<feature type="binding site" evidence="1">
    <location>
        <position position="95"/>
    </location>
    <ligand>
        <name>substrate</name>
    </ligand>
</feature>
<feature type="binding site" evidence="1">
    <location>
        <begin position="96"/>
        <end position="98"/>
    </location>
    <ligand>
        <name>ATP</name>
        <dbReference type="ChEBI" id="CHEBI:30616"/>
    </ligand>
</feature>
<feature type="binding site" evidence="1">
    <location>
        <position position="106"/>
    </location>
    <ligand>
        <name>ATP</name>
        <dbReference type="ChEBI" id="CHEBI:30616"/>
    </ligand>
</feature>
<feature type="binding site" evidence="1">
    <location>
        <begin position="131"/>
        <end position="137"/>
    </location>
    <ligand>
        <name>ATP</name>
        <dbReference type="ChEBI" id="CHEBI:30616"/>
    </ligand>
</feature>
<feature type="site" description="Transition state stabilizer" evidence="1">
    <location>
        <position position="25"/>
    </location>
</feature>
<dbReference type="EC" id="2.7.7.3" evidence="1"/>
<dbReference type="EMBL" id="CR628336">
    <property type="protein sequence ID" value="CAH11757.1"/>
    <property type="molecule type" value="Genomic_DNA"/>
</dbReference>
<dbReference type="RefSeq" id="WP_011213170.1">
    <property type="nucleotide sequence ID" value="NC_006368.1"/>
</dbReference>
<dbReference type="SMR" id="Q5X7J6"/>
<dbReference type="KEGG" id="lpp:lpp0609"/>
<dbReference type="LegioList" id="lpp0609"/>
<dbReference type="HOGENOM" id="CLU_100149_0_1_6"/>
<dbReference type="UniPathway" id="UPA00241">
    <property type="reaction ID" value="UER00355"/>
</dbReference>
<dbReference type="GO" id="GO:0005737">
    <property type="term" value="C:cytoplasm"/>
    <property type="evidence" value="ECO:0007669"/>
    <property type="project" value="UniProtKB-SubCell"/>
</dbReference>
<dbReference type="GO" id="GO:0005524">
    <property type="term" value="F:ATP binding"/>
    <property type="evidence" value="ECO:0007669"/>
    <property type="project" value="UniProtKB-KW"/>
</dbReference>
<dbReference type="GO" id="GO:0004595">
    <property type="term" value="F:pantetheine-phosphate adenylyltransferase activity"/>
    <property type="evidence" value="ECO:0007669"/>
    <property type="project" value="UniProtKB-UniRule"/>
</dbReference>
<dbReference type="GO" id="GO:0015937">
    <property type="term" value="P:coenzyme A biosynthetic process"/>
    <property type="evidence" value="ECO:0007669"/>
    <property type="project" value="UniProtKB-UniRule"/>
</dbReference>
<dbReference type="CDD" id="cd02163">
    <property type="entry name" value="PPAT"/>
    <property type="match status" value="1"/>
</dbReference>
<dbReference type="Gene3D" id="3.40.50.620">
    <property type="entry name" value="HUPs"/>
    <property type="match status" value="1"/>
</dbReference>
<dbReference type="HAMAP" id="MF_00151">
    <property type="entry name" value="PPAT_bact"/>
    <property type="match status" value="1"/>
</dbReference>
<dbReference type="InterPro" id="IPR004821">
    <property type="entry name" value="Cyt_trans-like"/>
</dbReference>
<dbReference type="InterPro" id="IPR001980">
    <property type="entry name" value="PPAT"/>
</dbReference>
<dbReference type="InterPro" id="IPR014729">
    <property type="entry name" value="Rossmann-like_a/b/a_fold"/>
</dbReference>
<dbReference type="NCBIfam" id="TIGR01510">
    <property type="entry name" value="coaD_prev_kdtB"/>
    <property type="match status" value="1"/>
</dbReference>
<dbReference type="NCBIfam" id="TIGR00125">
    <property type="entry name" value="cyt_tran_rel"/>
    <property type="match status" value="1"/>
</dbReference>
<dbReference type="PANTHER" id="PTHR21342">
    <property type="entry name" value="PHOSPHOPANTETHEINE ADENYLYLTRANSFERASE"/>
    <property type="match status" value="1"/>
</dbReference>
<dbReference type="PANTHER" id="PTHR21342:SF1">
    <property type="entry name" value="PHOSPHOPANTETHEINE ADENYLYLTRANSFERASE"/>
    <property type="match status" value="1"/>
</dbReference>
<dbReference type="Pfam" id="PF01467">
    <property type="entry name" value="CTP_transf_like"/>
    <property type="match status" value="1"/>
</dbReference>
<dbReference type="PRINTS" id="PR01020">
    <property type="entry name" value="LPSBIOSNTHSS"/>
</dbReference>
<dbReference type="SUPFAM" id="SSF52374">
    <property type="entry name" value="Nucleotidylyl transferase"/>
    <property type="match status" value="1"/>
</dbReference>
<organism>
    <name type="scientific">Legionella pneumophila (strain Paris)</name>
    <dbReference type="NCBI Taxonomy" id="297246"/>
    <lineage>
        <taxon>Bacteria</taxon>
        <taxon>Pseudomonadati</taxon>
        <taxon>Pseudomonadota</taxon>
        <taxon>Gammaproteobacteria</taxon>
        <taxon>Legionellales</taxon>
        <taxon>Legionellaceae</taxon>
        <taxon>Legionella</taxon>
    </lineage>
</organism>
<protein>
    <recommendedName>
        <fullName evidence="1">Phosphopantetheine adenylyltransferase</fullName>
        <ecNumber evidence="1">2.7.7.3</ecNumber>
    </recommendedName>
    <alternativeName>
        <fullName evidence="1">Dephospho-CoA pyrophosphorylase</fullName>
    </alternativeName>
    <alternativeName>
        <fullName evidence="1">Pantetheine-phosphate adenylyltransferase</fullName>
        <shortName evidence="1">PPAT</shortName>
    </alternativeName>
</protein>
<reference key="1">
    <citation type="journal article" date="2004" name="Nat. Genet.">
        <title>Evidence in the Legionella pneumophila genome for exploitation of host cell functions and high genome plasticity.</title>
        <authorList>
            <person name="Cazalet C."/>
            <person name="Rusniok C."/>
            <person name="Brueggemann H."/>
            <person name="Zidane N."/>
            <person name="Magnier A."/>
            <person name="Ma L."/>
            <person name="Tichit M."/>
            <person name="Jarraud S."/>
            <person name="Bouchier C."/>
            <person name="Vandenesch F."/>
            <person name="Kunst F."/>
            <person name="Etienne J."/>
            <person name="Glaser P."/>
            <person name="Buchrieser C."/>
        </authorList>
    </citation>
    <scope>NUCLEOTIDE SEQUENCE [LARGE SCALE GENOMIC DNA]</scope>
    <source>
        <strain>Paris</strain>
    </source>
</reference>
<evidence type="ECO:0000255" key="1">
    <source>
        <dbReference type="HAMAP-Rule" id="MF_00151"/>
    </source>
</evidence>